<dbReference type="EMBL" id="AF288394">
    <property type="protein sequence ID" value="AAG60614.1"/>
    <property type="status" value="ALT_INIT"/>
    <property type="molecule type" value="mRNA"/>
</dbReference>
<dbReference type="EMBL" id="AK296655">
    <property type="protein sequence ID" value="BAG59252.1"/>
    <property type="molecule type" value="mRNA"/>
</dbReference>
<dbReference type="EMBL" id="AL157943">
    <property type="status" value="NOT_ANNOTATED_CDS"/>
    <property type="molecule type" value="Genomic_DNA"/>
</dbReference>
<dbReference type="EMBL" id="AL158011">
    <property type="status" value="NOT_ANNOTATED_CDS"/>
    <property type="molecule type" value="Genomic_DNA"/>
</dbReference>
<dbReference type="EMBL" id="CH471067">
    <property type="protein sequence ID" value="EAW91174.1"/>
    <property type="molecule type" value="Genomic_DNA"/>
</dbReference>
<dbReference type="EMBL" id="BC022030">
    <property type="protein sequence ID" value="AAH22030.1"/>
    <property type="molecule type" value="mRNA"/>
</dbReference>
<dbReference type="CCDS" id="CCDS1361.1">
    <molecule id="Q8WW01-1"/>
</dbReference>
<dbReference type="CCDS" id="CCDS44286.1">
    <molecule id="Q8WW01-2"/>
</dbReference>
<dbReference type="RefSeq" id="NP_001120866.1">
    <molecule id="Q8WW01-2"/>
    <property type="nucleotide sequence ID" value="NM_001127394.4"/>
</dbReference>
<dbReference type="RefSeq" id="NP_001287693.1">
    <property type="nucleotide sequence ID" value="NM_001300764.1"/>
</dbReference>
<dbReference type="RefSeq" id="NP_001287695.1">
    <property type="nucleotide sequence ID" value="NM_001300766.1"/>
</dbReference>
<dbReference type="RefSeq" id="NP_443197.1">
    <molecule id="Q8WW01-1"/>
    <property type="nucleotide sequence ID" value="NM_052965.4"/>
</dbReference>
<dbReference type="PDB" id="2GW6">
    <property type="method" value="NMR"/>
    <property type="chains" value="A/B=36-157"/>
</dbReference>
<dbReference type="PDB" id="6Z9U">
    <property type="method" value="X-ray"/>
    <property type="resolution" value="2.10 A"/>
    <property type="chains" value="B/D=23-170"/>
</dbReference>
<dbReference type="PDB" id="7UXA">
    <property type="method" value="EM"/>
    <property type="resolution" value="3.28 A"/>
    <property type="chains" value="B=1-171"/>
</dbReference>
<dbReference type="PDB" id="7ZRZ">
    <property type="method" value="EM"/>
    <property type="resolution" value="3.09 A"/>
    <property type="chains" value="DP1=1-171"/>
</dbReference>
<dbReference type="PDB" id="8HMY">
    <property type="method" value="EM"/>
    <property type="resolution" value="2.94 A"/>
    <property type="chains" value="D=1-171"/>
</dbReference>
<dbReference type="PDB" id="8HMZ">
    <property type="method" value="EM"/>
    <property type="resolution" value="2.90 A"/>
    <property type="chains" value="D=1-171"/>
</dbReference>
<dbReference type="PDB" id="8ISS">
    <property type="method" value="EM"/>
    <property type="resolution" value="3.19 A"/>
    <property type="chains" value="A=1-171"/>
</dbReference>
<dbReference type="PDBsum" id="2GW6"/>
<dbReference type="PDBsum" id="6Z9U"/>
<dbReference type="PDBsum" id="7UXA"/>
<dbReference type="PDBsum" id="7ZRZ"/>
<dbReference type="PDBsum" id="8HMY"/>
<dbReference type="PDBsum" id="8HMZ"/>
<dbReference type="PDBsum" id="8ISS"/>
<dbReference type="BMRB" id="Q8WW01"/>
<dbReference type="EMDB" id="EMD-14923"/>
<dbReference type="EMDB" id="EMD-26856"/>
<dbReference type="EMDB" id="EMD-35694"/>
<dbReference type="SMR" id="Q8WW01"/>
<dbReference type="BioGRID" id="125513">
    <property type="interactions" value="61"/>
</dbReference>
<dbReference type="ComplexPortal" id="CPX-2707">
    <property type="entry name" value="tRNA-intron splicing endonuclease complex"/>
</dbReference>
<dbReference type="CORUM" id="Q8WW01"/>
<dbReference type="FunCoup" id="Q8WW01">
    <property type="interactions" value="1690"/>
</dbReference>
<dbReference type="IntAct" id="Q8WW01">
    <property type="interactions" value="58"/>
</dbReference>
<dbReference type="MINT" id="Q8WW01"/>
<dbReference type="STRING" id="9606.ENSP00000355299"/>
<dbReference type="GlyGen" id="Q8WW01">
    <property type="glycosylation" value="3 sites, 1 O-linked glycan (2 sites)"/>
</dbReference>
<dbReference type="iPTMnet" id="Q8WW01"/>
<dbReference type="PhosphoSitePlus" id="Q8WW01"/>
<dbReference type="BioMuta" id="TSEN15"/>
<dbReference type="DMDM" id="50401628"/>
<dbReference type="jPOST" id="Q8WW01"/>
<dbReference type="MassIVE" id="Q8WW01"/>
<dbReference type="PaxDb" id="9606-ENSP00000355299"/>
<dbReference type="PeptideAtlas" id="Q8WW01"/>
<dbReference type="ProteomicsDB" id="74840">
    <molecule id="Q8WW01-1"/>
</dbReference>
<dbReference type="ProteomicsDB" id="74841">
    <molecule id="Q8WW01-2"/>
</dbReference>
<dbReference type="Pumba" id="Q8WW01"/>
<dbReference type="Antibodypedia" id="34450">
    <property type="antibodies" value="112 antibodies from 17 providers"/>
</dbReference>
<dbReference type="DNASU" id="116461"/>
<dbReference type="Ensembl" id="ENST00000423085.7">
    <molecule id="Q8WW01-2"/>
    <property type="protein sequence ID" value="ENSP00000402002.2"/>
    <property type="gene ID" value="ENSG00000198860.14"/>
</dbReference>
<dbReference type="Ensembl" id="ENST00000645668.2">
    <molecule id="Q8WW01-1"/>
    <property type="protein sequence ID" value="ENSP00000493902.2"/>
    <property type="gene ID" value="ENSG00000198860.14"/>
</dbReference>
<dbReference type="GeneID" id="116461"/>
<dbReference type="KEGG" id="hsa:116461"/>
<dbReference type="MANE-Select" id="ENST00000645668.2">
    <property type="protein sequence ID" value="ENSP00000493902.2"/>
    <property type="RefSeq nucleotide sequence ID" value="NM_052965.4"/>
    <property type="RefSeq protein sequence ID" value="NP_443197.1"/>
</dbReference>
<dbReference type="UCSC" id="uc001gqt.5">
    <molecule id="Q8WW01-1"/>
    <property type="organism name" value="human"/>
</dbReference>
<dbReference type="AGR" id="HGNC:16791"/>
<dbReference type="CTD" id="116461"/>
<dbReference type="DisGeNET" id="116461"/>
<dbReference type="GeneCards" id="TSEN15"/>
<dbReference type="HGNC" id="HGNC:16791">
    <property type="gene designation" value="TSEN15"/>
</dbReference>
<dbReference type="HPA" id="ENSG00000198860">
    <property type="expression patterns" value="Low tissue specificity"/>
</dbReference>
<dbReference type="MalaCards" id="TSEN15"/>
<dbReference type="MIM" id="608756">
    <property type="type" value="gene"/>
</dbReference>
<dbReference type="MIM" id="617026">
    <property type="type" value="phenotype"/>
</dbReference>
<dbReference type="neXtProt" id="NX_Q8WW01"/>
<dbReference type="OpenTargets" id="ENSG00000198860"/>
<dbReference type="Orphanet" id="2524">
    <property type="disease" value="Pontocerebellar hypoplasia type 2"/>
</dbReference>
<dbReference type="PharmGKB" id="PA162407135"/>
<dbReference type="VEuPathDB" id="HostDB:ENSG00000198860"/>
<dbReference type="eggNOG" id="ENOG502S21U">
    <property type="taxonomic scope" value="Eukaryota"/>
</dbReference>
<dbReference type="GeneTree" id="ENSGT00390000014781"/>
<dbReference type="HOGENOM" id="CLU_130469_1_0_1"/>
<dbReference type="InParanoid" id="Q8WW01"/>
<dbReference type="OrthoDB" id="10002170at2759"/>
<dbReference type="PAN-GO" id="Q8WW01">
    <property type="GO annotations" value="0 GO annotations based on evolutionary models"/>
</dbReference>
<dbReference type="PhylomeDB" id="Q8WW01"/>
<dbReference type="TreeFam" id="TF336144"/>
<dbReference type="BioCyc" id="MetaCyc:HS13020-MONOMER"/>
<dbReference type="BRENDA" id="4.6.1.16">
    <property type="organism ID" value="2681"/>
</dbReference>
<dbReference type="PathwayCommons" id="Q8WW01"/>
<dbReference type="Reactome" id="R-HSA-6784531">
    <property type="pathway name" value="tRNA processing in the nucleus"/>
</dbReference>
<dbReference type="SignaLink" id="Q8WW01"/>
<dbReference type="BioGRID-ORCS" id="116461">
    <property type="hits" value="59 hits in 1113 CRISPR screens"/>
</dbReference>
<dbReference type="ChiTaRS" id="TSEN15">
    <property type="organism name" value="human"/>
</dbReference>
<dbReference type="EvolutionaryTrace" id="Q8WW01"/>
<dbReference type="GeneWiki" id="C1orf19"/>
<dbReference type="GenomeRNAi" id="116461"/>
<dbReference type="Pharos" id="Q8WW01">
    <property type="development level" value="Tbio"/>
</dbReference>
<dbReference type="PRO" id="PR:Q8WW01"/>
<dbReference type="Proteomes" id="UP000005640">
    <property type="component" value="Chromosome 1"/>
</dbReference>
<dbReference type="RNAct" id="Q8WW01">
    <property type="molecule type" value="protein"/>
</dbReference>
<dbReference type="Bgee" id="ENSG00000198860">
    <property type="expression patterns" value="Expressed in left ventricle myocardium and 183 other cell types or tissues"/>
</dbReference>
<dbReference type="ExpressionAtlas" id="Q8WW01">
    <property type="expression patterns" value="baseline and differential"/>
</dbReference>
<dbReference type="GO" id="GO:0005730">
    <property type="term" value="C:nucleolus"/>
    <property type="evidence" value="ECO:0007669"/>
    <property type="project" value="UniProtKB-SubCell"/>
</dbReference>
<dbReference type="GO" id="GO:0005654">
    <property type="term" value="C:nucleoplasm"/>
    <property type="evidence" value="ECO:0000304"/>
    <property type="project" value="Reactome"/>
</dbReference>
<dbReference type="GO" id="GO:0003676">
    <property type="term" value="F:nucleic acid binding"/>
    <property type="evidence" value="ECO:0007669"/>
    <property type="project" value="InterPro"/>
</dbReference>
<dbReference type="GO" id="GO:0006397">
    <property type="term" value="P:mRNA processing"/>
    <property type="evidence" value="ECO:0007669"/>
    <property type="project" value="UniProtKB-KW"/>
</dbReference>
<dbReference type="GO" id="GO:0006388">
    <property type="term" value="P:tRNA splicing, via endonucleolytic cleavage and ligation"/>
    <property type="evidence" value="ECO:0007669"/>
    <property type="project" value="InterPro"/>
</dbReference>
<dbReference type="FunFam" id="3.40.1350.10:FF:000003">
    <property type="entry name" value="tRNA-splicing endonuclease subunit Sen15 isoform X2"/>
    <property type="match status" value="1"/>
</dbReference>
<dbReference type="Gene3D" id="3.40.1350.10">
    <property type="match status" value="1"/>
</dbReference>
<dbReference type="InterPro" id="IPR018593">
    <property type="entry name" value="tRNA-endonuc_su_Sen15"/>
</dbReference>
<dbReference type="InterPro" id="IPR011856">
    <property type="entry name" value="tRNA_endonuc-like_dom_sf"/>
</dbReference>
<dbReference type="InterPro" id="IPR036167">
    <property type="entry name" value="tRNA_intron_Endo_cat-like_sf"/>
</dbReference>
<dbReference type="PANTHER" id="PTHR28582">
    <property type="entry name" value="TRNA-SPLICING ENDONUCLEASE SUBUNIT SEN15"/>
    <property type="match status" value="1"/>
</dbReference>
<dbReference type="PANTHER" id="PTHR28582:SF1">
    <property type="entry name" value="TRNA-SPLICING ENDONUCLEASE SUBUNIT SEN15"/>
    <property type="match status" value="1"/>
</dbReference>
<dbReference type="Pfam" id="PF09631">
    <property type="entry name" value="Sen15"/>
    <property type="match status" value="1"/>
</dbReference>
<dbReference type="SUPFAM" id="SSF53032">
    <property type="entry name" value="tRNA-intron endonuclease catalytic domain-like"/>
    <property type="match status" value="1"/>
</dbReference>
<name>SEN15_HUMAN</name>
<proteinExistence type="evidence at protein level"/>
<reference key="1">
    <citation type="journal article" date="2001" name="Genomics">
        <title>Cloning and characterization of 13 novel transcripts and the human RGS8 gene from the 1q25 region encompassing the hereditary prostate cancer (HPC1) locus.</title>
        <authorList>
            <person name="Sood R."/>
            <person name="Bonner T.I."/>
            <person name="Malakowska I."/>
            <person name="Stephan D.A."/>
            <person name="Robbins C.M."/>
            <person name="Connors T.D."/>
            <person name="Morgenbesser S.D."/>
            <person name="Su K."/>
            <person name="Faruque M.U."/>
            <person name="Pinkett H."/>
            <person name="Graham C."/>
            <person name="Baxevanis A.D."/>
            <person name="Klinger K.W."/>
            <person name="Landes G.M."/>
            <person name="Trent J.M."/>
            <person name="Carpten J.D."/>
        </authorList>
    </citation>
    <scope>NUCLEOTIDE SEQUENCE [MRNA] (ISOFORM 1)</scope>
    <scope>TISSUE SPECIFICITY</scope>
</reference>
<reference key="2">
    <citation type="journal article" date="2004" name="Nat. Genet.">
        <title>Complete sequencing and characterization of 21,243 full-length human cDNAs.</title>
        <authorList>
            <person name="Ota T."/>
            <person name="Suzuki Y."/>
            <person name="Nishikawa T."/>
            <person name="Otsuki T."/>
            <person name="Sugiyama T."/>
            <person name="Irie R."/>
            <person name="Wakamatsu A."/>
            <person name="Hayashi K."/>
            <person name="Sato H."/>
            <person name="Nagai K."/>
            <person name="Kimura K."/>
            <person name="Makita H."/>
            <person name="Sekine M."/>
            <person name="Obayashi M."/>
            <person name="Nishi T."/>
            <person name="Shibahara T."/>
            <person name="Tanaka T."/>
            <person name="Ishii S."/>
            <person name="Yamamoto J."/>
            <person name="Saito K."/>
            <person name="Kawai Y."/>
            <person name="Isono Y."/>
            <person name="Nakamura Y."/>
            <person name="Nagahari K."/>
            <person name="Murakami K."/>
            <person name="Yasuda T."/>
            <person name="Iwayanagi T."/>
            <person name="Wagatsuma M."/>
            <person name="Shiratori A."/>
            <person name="Sudo H."/>
            <person name="Hosoiri T."/>
            <person name="Kaku Y."/>
            <person name="Kodaira H."/>
            <person name="Kondo H."/>
            <person name="Sugawara M."/>
            <person name="Takahashi M."/>
            <person name="Kanda K."/>
            <person name="Yokoi T."/>
            <person name="Furuya T."/>
            <person name="Kikkawa E."/>
            <person name="Omura Y."/>
            <person name="Abe K."/>
            <person name="Kamihara K."/>
            <person name="Katsuta N."/>
            <person name="Sato K."/>
            <person name="Tanikawa M."/>
            <person name="Yamazaki M."/>
            <person name="Ninomiya K."/>
            <person name="Ishibashi T."/>
            <person name="Yamashita H."/>
            <person name="Murakawa K."/>
            <person name="Fujimori K."/>
            <person name="Tanai H."/>
            <person name="Kimata M."/>
            <person name="Watanabe M."/>
            <person name="Hiraoka S."/>
            <person name="Chiba Y."/>
            <person name="Ishida S."/>
            <person name="Ono Y."/>
            <person name="Takiguchi S."/>
            <person name="Watanabe S."/>
            <person name="Yosida M."/>
            <person name="Hotuta T."/>
            <person name="Kusano J."/>
            <person name="Kanehori K."/>
            <person name="Takahashi-Fujii A."/>
            <person name="Hara H."/>
            <person name="Tanase T.-O."/>
            <person name="Nomura Y."/>
            <person name="Togiya S."/>
            <person name="Komai F."/>
            <person name="Hara R."/>
            <person name="Takeuchi K."/>
            <person name="Arita M."/>
            <person name="Imose N."/>
            <person name="Musashino K."/>
            <person name="Yuuki H."/>
            <person name="Oshima A."/>
            <person name="Sasaki N."/>
            <person name="Aotsuka S."/>
            <person name="Yoshikawa Y."/>
            <person name="Matsunawa H."/>
            <person name="Ichihara T."/>
            <person name="Shiohata N."/>
            <person name="Sano S."/>
            <person name="Moriya S."/>
            <person name="Momiyama H."/>
            <person name="Satoh N."/>
            <person name="Takami S."/>
            <person name="Terashima Y."/>
            <person name="Suzuki O."/>
            <person name="Nakagawa S."/>
            <person name="Senoh A."/>
            <person name="Mizoguchi H."/>
            <person name="Goto Y."/>
            <person name="Shimizu F."/>
            <person name="Wakebe H."/>
            <person name="Hishigaki H."/>
            <person name="Watanabe T."/>
            <person name="Sugiyama A."/>
            <person name="Takemoto M."/>
            <person name="Kawakami B."/>
            <person name="Yamazaki M."/>
            <person name="Watanabe K."/>
            <person name="Kumagai A."/>
            <person name="Itakura S."/>
            <person name="Fukuzumi Y."/>
            <person name="Fujimori Y."/>
            <person name="Komiyama M."/>
            <person name="Tashiro H."/>
            <person name="Tanigami A."/>
            <person name="Fujiwara T."/>
            <person name="Ono T."/>
            <person name="Yamada K."/>
            <person name="Fujii Y."/>
            <person name="Ozaki K."/>
            <person name="Hirao M."/>
            <person name="Ohmori Y."/>
            <person name="Kawabata A."/>
            <person name="Hikiji T."/>
            <person name="Kobatake N."/>
            <person name="Inagaki H."/>
            <person name="Ikema Y."/>
            <person name="Okamoto S."/>
            <person name="Okitani R."/>
            <person name="Kawakami T."/>
            <person name="Noguchi S."/>
            <person name="Itoh T."/>
            <person name="Shigeta K."/>
            <person name="Senba T."/>
            <person name="Matsumura K."/>
            <person name="Nakajima Y."/>
            <person name="Mizuno T."/>
            <person name="Morinaga M."/>
            <person name="Sasaki M."/>
            <person name="Togashi T."/>
            <person name="Oyama M."/>
            <person name="Hata H."/>
            <person name="Watanabe M."/>
            <person name="Komatsu T."/>
            <person name="Mizushima-Sugano J."/>
            <person name="Satoh T."/>
            <person name="Shirai Y."/>
            <person name="Takahashi Y."/>
            <person name="Nakagawa K."/>
            <person name="Okumura K."/>
            <person name="Nagase T."/>
            <person name="Nomura N."/>
            <person name="Kikuchi H."/>
            <person name="Masuho Y."/>
            <person name="Yamashita R."/>
            <person name="Nakai K."/>
            <person name="Yada T."/>
            <person name="Nakamura Y."/>
            <person name="Ohara O."/>
            <person name="Isogai T."/>
            <person name="Sugano S."/>
        </authorList>
    </citation>
    <scope>NUCLEOTIDE SEQUENCE [LARGE SCALE MRNA] (ISOFORM 2)</scope>
    <source>
        <tissue>Colon</tissue>
    </source>
</reference>
<reference key="3">
    <citation type="journal article" date="2006" name="Nature">
        <title>The DNA sequence and biological annotation of human chromosome 1.</title>
        <authorList>
            <person name="Gregory S.G."/>
            <person name="Barlow K.F."/>
            <person name="McLay K.E."/>
            <person name="Kaul R."/>
            <person name="Swarbreck D."/>
            <person name="Dunham A."/>
            <person name="Scott C.E."/>
            <person name="Howe K.L."/>
            <person name="Woodfine K."/>
            <person name="Spencer C.C.A."/>
            <person name="Jones M.C."/>
            <person name="Gillson C."/>
            <person name="Searle S."/>
            <person name="Zhou Y."/>
            <person name="Kokocinski F."/>
            <person name="McDonald L."/>
            <person name="Evans R."/>
            <person name="Phillips K."/>
            <person name="Atkinson A."/>
            <person name="Cooper R."/>
            <person name="Jones C."/>
            <person name="Hall R.E."/>
            <person name="Andrews T.D."/>
            <person name="Lloyd C."/>
            <person name="Ainscough R."/>
            <person name="Almeida J.P."/>
            <person name="Ambrose K.D."/>
            <person name="Anderson F."/>
            <person name="Andrew R.W."/>
            <person name="Ashwell R.I.S."/>
            <person name="Aubin K."/>
            <person name="Babbage A.K."/>
            <person name="Bagguley C.L."/>
            <person name="Bailey J."/>
            <person name="Beasley H."/>
            <person name="Bethel G."/>
            <person name="Bird C.P."/>
            <person name="Bray-Allen S."/>
            <person name="Brown J.Y."/>
            <person name="Brown A.J."/>
            <person name="Buckley D."/>
            <person name="Burton J."/>
            <person name="Bye J."/>
            <person name="Carder C."/>
            <person name="Chapman J.C."/>
            <person name="Clark S.Y."/>
            <person name="Clarke G."/>
            <person name="Clee C."/>
            <person name="Cobley V."/>
            <person name="Collier R.E."/>
            <person name="Corby N."/>
            <person name="Coville G.J."/>
            <person name="Davies J."/>
            <person name="Deadman R."/>
            <person name="Dunn M."/>
            <person name="Earthrowl M."/>
            <person name="Ellington A.G."/>
            <person name="Errington H."/>
            <person name="Frankish A."/>
            <person name="Frankland J."/>
            <person name="French L."/>
            <person name="Garner P."/>
            <person name="Garnett J."/>
            <person name="Gay L."/>
            <person name="Ghori M.R.J."/>
            <person name="Gibson R."/>
            <person name="Gilby L.M."/>
            <person name="Gillett W."/>
            <person name="Glithero R.J."/>
            <person name="Grafham D.V."/>
            <person name="Griffiths C."/>
            <person name="Griffiths-Jones S."/>
            <person name="Grocock R."/>
            <person name="Hammond S."/>
            <person name="Harrison E.S.I."/>
            <person name="Hart E."/>
            <person name="Haugen E."/>
            <person name="Heath P.D."/>
            <person name="Holmes S."/>
            <person name="Holt K."/>
            <person name="Howden P.J."/>
            <person name="Hunt A.R."/>
            <person name="Hunt S.E."/>
            <person name="Hunter G."/>
            <person name="Isherwood J."/>
            <person name="James R."/>
            <person name="Johnson C."/>
            <person name="Johnson D."/>
            <person name="Joy A."/>
            <person name="Kay M."/>
            <person name="Kershaw J.K."/>
            <person name="Kibukawa M."/>
            <person name="Kimberley A.M."/>
            <person name="King A."/>
            <person name="Knights A.J."/>
            <person name="Lad H."/>
            <person name="Laird G."/>
            <person name="Lawlor S."/>
            <person name="Leongamornlert D.A."/>
            <person name="Lloyd D.M."/>
            <person name="Loveland J."/>
            <person name="Lovell J."/>
            <person name="Lush M.J."/>
            <person name="Lyne R."/>
            <person name="Martin S."/>
            <person name="Mashreghi-Mohammadi M."/>
            <person name="Matthews L."/>
            <person name="Matthews N.S.W."/>
            <person name="McLaren S."/>
            <person name="Milne S."/>
            <person name="Mistry S."/>
            <person name="Moore M.J.F."/>
            <person name="Nickerson T."/>
            <person name="O'Dell C.N."/>
            <person name="Oliver K."/>
            <person name="Palmeiri A."/>
            <person name="Palmer S.A."/>
            <person name="Parker A."/>
            <person name="Patel D."/>
            <person name="Pearce A.V."/>
            <person name="Peck A.I."/>
            <person name="Pelan S."/>
            <person name="Phelps K."/>
            <person name="Phillimore B.J."/>
            <person name="Plumb R."/>
            <person name="Rajan J."/>
            <person name="Raymond C."/>
            <person name="Rouse G."/>
            <person name="Saenphimmachak C."/>
            <person name="Sehra H.K."/>
            <person name="Sheridan E."/>
            <person name="Shownkeen R."/>
            <person name="Sims S."/>
            <person name="Skuce C.D."/>
            <person name="Smith M."/>
            <person name="Steward C."/>
            <person name="Subramanian S."/>
            <person name="Sycamore N."/>
            <person name="Tracey A."/>
            <person name="Tromans A."/>
            <person name="Van Helmond Z."/>
            <person name="Wall M."/>
            <person name="Wallis J.M."/>
            <person name="White S."/>
            <person name="Whitehead S.L."/>
            <person name="Wilkinson J.E."/>
            <person name="Willey D.L."/>
            <person name="Williams H."/>
            <person name="Wilming L."/>
            <person name="Wray P.W."/>
            <person name="Wu Z."/>
            <person name="Coulson A."/>
            <person name="Vaudin M."/>
            <person name="Sulston J.E."/>
            <person name="Durbin R.M."/>
            <person name="Hubbard T."/>
            <person name="Wooster R."/>
            <person name="Dunham I."/>
            <person name="Carter N.P."/>
            <person name="McVean G."/>
            <person name="Ross M.T."/>
            <person name="Harrow J."/>
            <person name="Olson M.V."/>
            <person name="Beck S."/>
            <person name="Rogers J."/>
            <person name="Bentley D.R."/>
        </authorList>
    </citation>
    <scope>NUCLEOTIDE SEQUENCE [LARGE SCALE GENOMIC DNA]</scope>
</reference>
<reference key="4">
    <citation type="submission" date="2005-07" db="EMBL/GenBank/DDBJ databases">
        <authorList>
            <person name="Mural R.J."/>
            <person name="Istrail S."/>
            <person name="Sutton G."/>
            <person name="Florea L."/>
            <person name="Halpern A.L."/>
            <person name="Mobarry C.M."/>
            <person name="Lippert R."/>
            <person name="Walenz B."/>
            <person name="Shatkay H."/>
            <person name="Dew I."/>
            <person name="Miller J.R."/>
            <person name="Flanigan M.J."/>
            <person name="Edwards N.J."/>
            <person name="Bolanos R."/>
            <person name="Fasulo D."/>
            <person name="Halldorsson B.V."/>
            <person name="Hannenhalli S."/>
            <person name="Turner R."/>
            <person name="Yooseph S."/>
            <person name="Lu F."/>
            <person name="Nusskern D.R."/>
            <person name="Shue B.C."/>
            <person name="Zheng X.H."/>
            <person name="Zhong F."/>
            <person name="Delcher A.L."/>
            <person name="Huson D.H."/>
            <person name="Kravitz S.A."/>
            <person name="Mouchard L."/>
            <person name="Reinert K."/>
            <person name="Remington K.A."/>
            <person name="Clark A.G."/>
            <person name="Waterman M.S."/>
            <person name="Eichler E.E."/>
            <person name="Adams M.D."/>
            <person name="Hunkapiller M.W."/>
            <person name="Myers E.W."/>
            <person name="Venter J.C."/>
        </authorList>
    </citation>
    <scope>NUCLEOTIDE SEQUENCE [LARGE SCALE GENOMIC DNA]</scope>
</reference>
<reference key="5">
    <citation type="journal article" date="2004" name="Genome Res.">
        <title>The status, quality, and expansion of the NIH full-length cDNA project: the Mammalian Gene Collection (MGC).</title>
        <authorList>
            <consortium name="The MGC Project Team"/>
        </authorList>
    </citation>
    <scope>NUCLEOTIDE SEQUENCE [LARGE SCALE MRNA] (ISOFORM 1)</scope>
    <source>
        <tissue>Testis</tissue>
    </source>
</reference>
<reference key="6">
    <citation type="journal article" date="2004" name="Cell">
        <title>Identification of a human endonuclease complex reveals a link between tRNA splicing and pre-mRNA 3' end formation.</title>
        <authorList>
            <person name="Paushkin S.V."/>
            <person name="Patel M."/>
            <person name="Furia B.S."/>
            <person name="Peltz S.W."/>
            <person name="Trotta C.R."/>
        </authorList>
    </citation>
    <scope>PARTIAL PROTEIN SEQUENCE</scope>
    <scope>FUNCTION</scope>
    <scope>COMPONENT OF A COMPLEX WITH SEN2; SEN54; SEN34 AND CLP1</scope>
</reference>
<reference key="7">
    <citation type="journal article" date="2011" name="BMC Syst. Biol.">
        <title>Initial characterization of the human central proteome.</title>
        <authorList>
            <person name="Burkard T.R."/>
            <person name="Planyavsky M."/>
            <person name="Kaupe I."/>
            <person name="Breitwieser F.P."/>
            <person name="Buerckstuemmer T."/>
            <person name="Bennett K.L."/>
            <person name="Superti-Furga G."/>
            <person name="Colinge J."/>
        </authorList>
    </citation>
    <scope>IDENTIFICATION BY MASS SPECTROMETRY [LARGE SCALE ANALYSIS]</scope>
</reference>
<reference key="8">
    <citation type="journal article" date="2013" name="J. Proteome Res.">
        <title>Toward a comprehensive characterization of a human cancer cell phosphoproteome.</title>
        <authorList>
            <person name="Zhou H."/>
            <person name="Di Palma S."/>
            <person name="Preisinger C."/>
            <person name="Peng M."/>
            <person name="Polat A.N."/>
            <person name="Heck A.J."/>
            <person name="Mohammed S."/>
        </authorList>
    </citation>
    <scope>PHOSPHORYLATION [LARGE SCALE ANALYSIS] AT SER-7 AND SER-168</scope>
    <scope>IDENTIFICATION BY MASS SPECTROMETRY [LARGE SCALE ANALYSIS]</scope>
    <source>
        <tissue>Erythroleukemia</tissue>
    </source>
</reference>
<reference key="9">
    <citation type="journal article" date="2015" name="Cell Rep.">
        <title>Accelerating novel candidate gene discovery in neurogenetic disorders via whole-exome sequencing of prescreened multiplex consanguineous families.</title>
        <authorList>
            <person name="Alazami A.M."/>
            <person name="Patel N."/>
            <person name="Shamseldin H.E."/>
            <person name="Anazi S."/>
            <person name="Al-Dosari M.S."/>
            <person name="Alzahrani F."/>
            <person name="Hijazi H."/>
            <person name="Alshammari M."/>
            <person name="Aldahmesh M.A."/>
            <person name="Salih M.A."/>
            <person name="Faqeih E."/>
            <person name="Alhashem A."/>
            <person name="Bashiri F.A."/>
            <person name="Al-Owain M."/>
            <person name="Kentab A.Y."/>
            <person name="Sogaty S."/>
            <person name="Al Tala S."/>
            <person name="Temsah M.H."/>
            <person name="Tulbah M."/>
            <person name="Aljelaify R.F."/>
            <person name="Alshahwan S.A."/>
            <person name="Seidahmed M.Z."/>
            <person name="Alhadid A.A."/>
            <person name="Aldhalaan H."/>
            <person name="Alqallaf F."/>
            <person name="Kurdi W."/>
            <person name="Alfadhel M."/>
            <person name="Babay Z."/>
            <person name="Alsogheer M."/>
            <person name="Kaya N."/>
            <person name="Al-Hassnan Z.N."/>
            <person name="Abdel-Salam G.M."/>
            <person name="Al-Sannaa N."/>
            <person name="Al Mutairi F."/>
            <person name="El Khashab H.Y."/>
            <person name="Bohlega S."/>
            <person name="Jia X."/>
            <person name="Nguyen H.C."/>
            <person name="Hammami R."/>
            <person name="Adly N."/>
            <person name="Mohamed J.Y."/>
            <person name="Abdulwahab F."/>
            <person name="Ibrahim N."/>
            <person name="Naim E.A."/>
            <person name="Al-Younes B."/>
            <person name="Meyer B.F."/>
            <person name="Hashem M."/>
            <person name="Shaheen R."/>
            <person name="Xiong Y."/>
            <person name="Abouelhoda M."/>
            <person name="Aldeeri A.A."/>
            <person name="Monies D.M."/>
            <person name="Alkuraya F.S."/>
        </authorList>
    </citation>
    <scope>INVOLVEMENT IN PCH2F</scope>
    <scope>VARIANT PCH2F GLY-76</scope>
</reference>
<reference key="10">
    <citation type="journal article" date="2007" name="J. Mol. Biol.">
        <title>Three-dimensional structure determined for a subunit of human tRNA splicing endonuclease (Sen15) reveals a novel dimeric fold.</title>
        <authorList>
            <person name="Song J."/>
            <person name="Markley J.L."/>
        </authorList>
    </citation>
    <scope>STRUCTURE BY NMR OF 36-157</scope>
    <scope>HOMODIMERIZATION</scope>
</reference>
<reference key="11">
    <citation type="journal article" date="2016" name="Am. J. Hum. Genet.">
        <title>Autosomal-recessive mutations in the tRNA splicing endonuclease subunit TSEN15 cause pontocerebellar hypoplasia and progressive microcephaly.</title>
        <authorList>
            <person name="Breuss M.W."/>
            <person name="Sultan T."/>
            <person name="James K.N."/>
            <person name="Rosti R.O."/>
            <person name="Scott E."/>
            <person name="Musaev D."/>
            <person name="Furia B."/>
            <person name="Reis A."/>
            <person name="Sticht H."/>
            <person name="Al-Owain M."/>
            <person name="Alkuraya F.S."/>
            <person name="Reuter M.S."/>
            <person name="Abou Jamra R."/>
            <person name="Trotta C.R."/>
            <person name="Gleeson J.G."/>
        </authorList>
    </citation>
    <scope>VARIANTS PCH2F GLY-76; TYR-116 AND CYS-152</scope>
    <scope>CHARACTERIZATION OF VARIANTS PCH2F GLY-76; TYR-116 AND CYS-152</scope>
    <scope>FUNCTION</scope>
</reference>
<gene>
    <name type="primary">TSEN15</name>
    <name type="synonym">C1orf19</name>
    <name type="synonym">SEN15</name>
</gene>
<protein>
    <recommendedName>
        <fullName>tRNA-splicing endonuclease subunit Sen15</fullName>
    </recommendedName>
    <alternativeName>
        <fullName>SEN15 homolog</fullName>
        <shortName>HsSEN15</shortName>
    </alternativeName>
    <alternativeName>
        <fullName>tRNA-intron endonuclease Sen15</fullName>
    </alternativeName>
</protein>
<sequence>MEERGDSEPTPGCSGLGPGGVRGFGDGGGAPSWAPEDAWMGTHPKYLEMMELDIGDATQVYVAFLVYLDLMESKSWHEVNCVGLPELQLICLVGTEIEGEGLQTVVPTPITASLSHNRIREILKASRKLQGDPDLPMSFTLAIVESDSTIVYYKLTDGFMLPDPQNISLRR</sequence>
<feature type="chain" id="PRO_0000194023" description="tRNA-splicing endonuclease subunit Sen15">
    <location>
        <begin position="1"/>
        <end position="171"/>
    </location>
</feature>
<feature type="region of interest" description="Disordered" evidence="1">
    <location>
        <begin position="1"/>
        <end position="35"/>
    </location>
</feature>
<feature type="compositionally biased region" description="Gly residues" evidence="1">
    <location>
        <begin position="14"/>
        <end position="30"/>
    </location>
</feature>
<feature type="modified residue" description="Phosphoserine" evidence="9">
    <location>
        <position position="7"/>
    </location>
</feature>
<feature type="modified residue" description="Phosphoserine" evidence="9">
    <location>
        <position position="168"/>
    </location>
</feature>
<feature type="splice variant" id="VSP_042723" description="In isoform 2." evidence="7">
    <original>REILKASRKLQGDPDLPMSFTLAIVESDSTIVYYKLTDGFMLPDPQNISLRR</original>
    <variation>FLLEDDIHVS</variation>
    <location>
        <begin position="120"/>
        <end position="171"/>
    </location>
</feature>
<feature type="sequence variant" id="VAR_019457" description="In dbSNP:rs2274432.">
    <original>G</original>
    <variation>D</variation>
    <location>
        <position position="19"/>
    </location>
</feature>
<feature type="sequence variant" id="VAR_019458" description="In dbSNP:rs1046934.">
    <original>Q</original>
    <variation>H</variation>
    <location>
        <position position="59"/>
    </location>
</feature>
<feature type="sequence variant" id="VAR_077061" description="In PCH2F; Almost complete loss of tRNA-intron endonuclease activity in vitro; may affect protein levels; dbSNP:rs730882223." evidence="5 6">
    <original>W</original>
    <variation>G</variation>
    <location>
        <position position="76"/>
    </location>
</feature>
<feature type="sequence variant" id="VAR_077062" description="In PCH2F; Almost complete loss of tRNA-intron endonuclease activity in vitro; dbSNP:rs879253780." evidence="6">
    <original>H</original>
    <variation>Y</variation>
    <location>
        <position position="116"/>
    </location>
</feature>
<feature type="sequence variant" id="VAR_077063" description="In PCH2F; Almost complete loss of tRNA-intron endonuclease activity in vitro; may affect protein levels; dbSNP:rs879253779." evidence="6">
    <original>Y</original>
    <variation>C</variation>
    <location>
        <position position="152"/>
    </location>
</feature>
<feature type="helix" evidence="11">
    <location>
        <begin position="38"/>
        <end position="42"/>
    </location>
</feature>
<feature type="helix" evidence="11">
    <location>
        <begin position="44"/>
        <end position="51"/>
    </location>
</feature>
<feature type="strand" evidence="10">
    <location>
        <begin position="52"/>
        <end position="54"/>
    </location>
</feature>
<feature type="helix" evidence="11">
    <location>
        <begin position="57"/>
        <end position="72"/>
    </location>
</feature>
<feature type="strand" evidence="11">
    <location>
        <begin position="77"/>
        <end position="84"/>
    </location>
</feature>
<feature type="turn" evidence="11">
    <location>
        <begin position="85"/>
        <end position="88"/>
    </location>
</feature>
<feature type="strand" evidence="11">
    <location>
        <begin position="89"/>
        <end position="97"/>
    </location>
</feature>
<feature type="turn" evidence="12">
    <location>
        <begin position="98"/>
        <end position="100"/>
    </location>
</feature>
<feature type="strand" evidence="11">
    <location>
        <begin position="103"/>
        <end position="109"/>
    </location>
</feature>
<feature type="strand" evidence="14">
    <location>
        <begin position="113"/>
        <end position="115"/>
    </location>
</feature>
<feature type="helix" evidence="11">
    <location>
        <begin position="116"/>
        <end position="129"/>
    </location>
</feature>
<feature type="strand" evidence="13">
    <location>
        <begin position="133"/>
        <end position="135"/>
    </location>
</feature>
<feature type="strand" evidence="11">
    <location>
        <begin position="138"/>
        <end position="144"/>
    </location>
</feature>
<feature type="strand" evidence="11">
    <location>
        <begin position="150"/>
        <end position="158"/>
    </location>
</feature>
<feature type="strand" evidence="11">
    <location>
        <begin position="167"/>
        <end position="169"/>
    </location>
</feature>
<organism>
    <name type="scientific">Homo sapiens</name>
    <name type="common">Human</name>
    <dbReference type="NCBI Taxonomy" id="9606"/>
    <lineage>
        <taxon>Eukaryota</taxon>
        <taxon>Metazoa</taxon>
        <taxon>Chordata</taxon>
        <taxon>Craniata</taxon>
        <taxon>Vertebrata</taxon>
        <taxon>Euteleostomi</taxon>
        <taxon>Mammalia</taxon>
        <taxon>Eutheria</taxon>
        <taxon>Euarchontoglires</taxon>
        <taxon>Primates</taxon>
        <taxon>Haplorrhini</taxon>
        <taxon>Catarrhini</taxon>
        <taxon>Hominidae</taxon>
        <taxon>Homo</taxon>
    </lineage>
</organism>
<evidence type="ECO:0000256" key="1">
    <source>
        <dbReference type="SAM" id="MobiDB-lite"/>
    </source>
</evidence>
<evidence type="ECO:0000269" key="2">
    <source>
    </source>
</evidence>
<evidence type="ECO:0000269" key="3">
    <source>
    </source>
</evidence>
<evidence type="ECO:0000269" key="4">
    <source>
    </source>
</evidence>
<evidence type="ECO:0000269" key="5">
    <source>
    </source>
</evidence>
<evidence type="ECO:0000269" key="6">
    <source>
    </source>
</evidence>
<evidence type="ECO:0000303" key="7">
    <source>
    </source>
</evidence>
<evidence type="ECO:0000305" key="8"/>
<evidence type="ECO:0007744" key="9">
    <source>
    </source>
</evidence>
<evidence type="ECO:0007829" key="10">
    <source>
        <dbReference type="PDB" id="2GW6"/>
    </source>
</evidence>
<evidence type="ECO:0007829" key="11">
    <source>
        <dbReference type="PDB" id="6Z9U"/>
    </source>
</evidence>
<evidence type="ECO:0007829" key="12">
    <source>
        <dbReference type="PDB" id="7UXA"/>
    </source>
</evidence>
<evidence type="ECO:0007829" key="13">
    <source>
        <dbReference type="PDB" id="8HMY"/>
    </source>
</evidence>
<evidence type="ECO:0007829" key="14">
    <source>
        <dbReference type="PDB" id="8HMZ"/>
    </source>
</evidence>
<accession>Q8WW01</accession>
<accession>B4DKP0</accession>
<accession>Q9BZQ5</accession>
<keyword id="KW-0002">3D-structure</keyword>
<keyword id="KW-0025">Alternative splicing</keyword>
<keyword id="KW-0903">Direct protein sequencing</keyword>
<keyword id="KW-0225">Disease variant</keyword>
<keyword id="KW-0507">mRNA processing</keyword>
<keyword id="KW-0539">Nucleus</keyword>
<keyword id="KW-0597">Phosphoprotein</keyword>
<keyword id="KW-1267">Proteomics identification</keyword>
<keyword id="KW-1185">Reference proteome</keyword>
<keyword id="KW-0819">tRNA processing</keyword>
<comment type="function">
    <text evidence="3 6">Non-catalytic subunit of the tRNA-splicing endonuclease complex, a complex responsible for identification and cleavage of the splice sites in pre-tRNA. It cleaves pre-tRNA at the 5' and 3' splice sites to release the intron. The products are an intron and two tRNA half-molecules bearing 2',3' cyclic phosphate and 5'-OH termini (PubMed:15109492, PubMed:27392077). There are no conserved sequences at the splice sites, but the intron is invariably located at the same site in the gene, placing the splice sites an invariant distance from the constant structural features of the tRNA body. The tRNA splicing endonuclease is also involved in mRNA processing via its association with pre-mRNA 3'-end processing factors, establishing a link between pre-tRNA splicing and pre-mRNA 3'-end formation, suggesting that the endonuclease subunits function in multiple RNA-processing events (PubMed:15109492).</text>
</comment>
<comment type="subunit">
    <text evidence="4">Homodimer (PubMed:17166513). tRNA splicing endonuclease is a heterotetramer composed of TSEN2, TSEN15, TSEN34/LENG5 and TSEN54. tRNA splicing endonuclease complex also contains proteins of the Pre-mRNA 3' end processing machinery, such as CLP1, CPSF1, CPSF4 and CSTF2.</text>
</comment>
<comment type="interaction">
    <interactant intactId="EBI-372432">
        <id>Q8WW01</id>
    </interactant>
    <interactant intactId="EBI-12351549">
        <id>Q9BQI0-4</id>
        <label>AIF1L</label>
    </interactant>
    <organismsDiffer>false</organismsDiffer>
    <experiments>3</experiments>
</comment>
<comment type="interaction">
    <interactant intactId="EBI-372432">
        <id>Q8WW01</id>
    </interactant>
    <interactant intactId="EBI-948603">
        <id>Q03989</id>
        <label>ARID5A</label>
    </interactant>
    <organismsDiffer>false</organismsDiffer>
    <experiments>3</experiments>
</comment>
<comment type="interaction">
    <interactant intactId="EBI-372432">
        <id>Q8WW01</id>
    </interactant>
    <interactant intactId="EBI-18394052">
        <id>Q8WXK4-2</id>
        <label>ASB12</label>
    </interactant>
    <organismsDiffer>false</organismsDiffer>
    <experiments>3</experiments>
</comment>
<comment type="interaction">
    <interactant intactId="EBI-372432">
        <id>Q8WW01</id>
    </interactant>
    <interactant intactId="EBI-742054">
        <id>Q96D03</id>
        <label>DDIT4L</label>
    </interactant>
    <organismsDiffer>false</organismsDiffer>
    <experiments>3</experiments>
</comment>
<comment type="interaction">
    <interactant intactId="EBI-372432">
        <id>Q8WW01</id>
    </interactant>
    <interactant intactId="EBI-10239299">
        <id>Q9NQM4</id>
        <label>DNAAF6</label>
    </interactant>
    <organismsDiffer>false</organismsDiffer>
    <experiments>3</experiments>
</comment>
<comment type="interaction">
    <interactant intactId="EBI-372432">
        <id>Q8WW01</id>
    </interactant>
    <interactant intactId="EBI-744099">
        <id>Q9H0I2</id>
        <label>ENKD1</label>
    </interactant>
    <organismsDiffer>false</organismsDiffer>
    <experiments>3</experiments>
</comment>
<comment type="interaction">
    <interactant intactId="EBI-372432">
        <id>Q8WW01</id>
    </interactant>
    <interactant intactId="EBI-739467">
        <id>Q9H8Y8</id>
        <label>GORASP2</label>
    </interactant>
    <organismsDiffer>false</organismsDiffer>
    <experiments>3</experiments>
</comment>
<comment type="interaction">
    <interactant intactId="EBI-372432">
        <id>Q8WW01</id>
    </interactant>
    <interactant intactId="EBI-7116203">
        <id>O75031</id>
        <label>HSF2BP</label>
    </interactant>
    <organismsDiffer>false</organismsDiffer>
    <experiments>3</experiments>
</comment>
<comment type="interaction">
    <interactant intactId="EBI-372432">
        <id>Q8WW01</id>
    </interactant>
    <interactant intactId="EBI-747204">
        <id>Q9UKT9</id>
        <label>IKZF3</label>
    </interactant>
    <organismsDiffer>false</organismsDiffer>
    <experiments>3</experiments>
</comment>
<comment type="interaction">
    <interactant intactId="EBI-372432">
        <id>Q8WW01</id>
    </interactant>
    <interactant intactId="EBI-6509505">
        <id>Q0VD86</id>
        <label>INCA1</label>
    </interactant>
    <organismsDiffer>false</organismsDiffer>
    <experiments>3</experiments>
</comment>
<comment type="interaction">
    <interactant intactId="EBI-372432">
        <id>Q8WW01</id>
    </interactant>
    <interactant intactId="EBI-11959475">
        <id>P25791-3</id>
        <label>LMO2</label>
    </interactant>
    <organismsDiffer>false</organismsDiffer>
    <experiments>3</experiments>
</comment>
<comment type="interaction">
    <interactant intactId="EBI-372432">
        <id>Q8WW01</id>
    </interactant>
    <interactant intactId="EBI-473196">
        <id>Q5T3J3</id>
        <label>LRIF1</label>
    </interactant>
    <organismsDiffer>false</organismsDiffer>
    <experiments>3</experiments>
</comment>
<comment type="interaction">
    <interactant intactId="EBI-372432">
        <id>Q8WW01</id>
    </interactant>
    <interactant intactId="EBI-19944212">
        <id>A8MW99</id>
        <label>MEI4</label>
    </interactant>
    <organismsDiffer>false</organismsDiffer>
    <experiments>3</experiments>
</comment>
<comment type="interaction">
    <interactant intactId="EBI-372432">
        <id>Q8WW01</id>
    </interactant>
    <interactant intactId="EBI-2548751">
        <id>Q8TD10</id>
        <label>MIPOL1</label>
    </interactant>
    <organismsDiffer>false</organismsDiffer>
    <experiments>3</experiments>
</comment>
<comment type="interaction">
    <interactant intactId="EBI-372432">
        <id>Q8WW01</id>
    </interactant>
    <interactant intactId="EBI-10302990">
        <id>Q9BYU1</id>
        <label>PBX4</label>
    </interactant>
    <organismsDiffer>false</organismsDiffer>
    <experiments>3</experiments>
</comment>
<comment type="interaction">
    <interactant intactId="EBI-372432">
        <id>Q8WW01</id>
    </interactant>
    <interactant intactId="EBI-2861380">
        <id>Q8TCD6</id>
        <label>PHOSPHO2</label>
    </interactant>
    <organismsDiffer>false</organismsDiffer>
    <experiments>5</experiments>
</comment>
<comment type="interaction">
    <interactant intactId="EBI-372432">
        <id>Q8WW01</id>
    </interactant>
    <interactant intactId="EBI-10694821">
        <id>Q6P1J6-2</id>
        <label>PLB1</label>
    </interactant>
    <organismsDiffer>false</organismsDiffer>
    <experiments>3</experiments>
</comment>
<comment type="interaction">
    <interactant intactId="EBI-372432">
        <id>Q8WW01</id>
    </interactant>
    <interactant intactId="EBI-347928">
        <id>P62487</id>
        <label>POLR2G</label>
    </interactant>
    <organismsDiffer>false</organismsDiffer>
    <experiments>3</experiments>
</comment>
<comment type="interaction">
    <interactant intactId="EBI-372432">
        <id>Q8WW01</id>
    </interactant>
    <interactant intactId="EBI-12029004">
        <id>P78424</id>
        <label>POU6F2</label>
    </interactant>
    <organismsDiffer>false</organismsDiffer>
    <experiments>3</experiments>
</comment>
<comment type="interaction">
    <interactant intactId="EBI-372432">
        <id>Q8WW01</id>
    </interactant>
    <interactant intactId="EBI-10829018">
        <id>Q04864-2</id>
        <label>REL</label>
    </interactant>
    <organismsDiffer>false</organismsDiffer>
    <experiments>3</experiments>
</comment>
<comment type="interaction">
    <interactant intactId="EBI-372432">
        <id>Q8WW01</id>
    </interactant>
    <interactant intactId="EBI-745958">
        <id>Q5VWN6</id>
        <label>TASOR2</label>
    </interactant>
    <organismsDiffer>false</organismsDiffer>
    <experiments>3</experiments>
</comment>
<comment type="interaction">
    <interactant intactId="EBI-372432">
        <id>Q8WW01</id>
    </interactant>
    <interactant intactId="EBI-11139477">
        <id>Q96N21</id>
        <label>TEPSIN</label>
    </interactant>
    <organismsDiffer>false</organismsDiffer>
    <experiments>3</experiments>
</comment>
<comment type="interaction">
    <interactant intactId="EBI-372432">
        <id>Q8WW01</id>
    </interactant>
    <interactant intactId="EBI-11741437">
        <id>Q08117-2</id>
        <label>TLE5</label>
    </interactant>
    <organismsDiffer>false</organismsDiffer>
    <experiments>3</experiments>
</comment>
<comment type="interaction">
    <interactant intactId="EBI-372432">
        <id>Q8WW01</id>
    </interactant>
    <interactant intactId="EBI-852089">
        <id>Q96PF2</id>
        <label>TSSK2</label>
    </interactant>
    <organismsDiffer>false</organismsDiffer>
    <experiments>3</experiments>
</comment>
<comment type="interaction">
    <interactant intactId="EBI-372432">
        <id>Q8WW01</id>
    </interactant>
    <interactant intactId="EBI-11975223">
        <id>Q70EL1-9</id>
        <label>USP54</label>
    </interactant>
    <organismsDiffer>false</organismsDiffer>
    <experiments>3</experiments>
</comment>
<comment type="interaction">
    <interactant intactId="EBI-372432">
        <id>Q8WW01</id>
    </interactant>
    <interactant intactId="EBI-2682299">
        <id>Q96NC0</id>
        <label>ZMAT2</label>
    </interactant>
    <organismsDiffer>false</organismsDiffer>
    <experiments>5</experiments>
</comment>
<comment type="interaction">
    <interactant intactId="EBI-372432">
        <id>Q8WW01</id>
    </interactant>
    <interactant intactId="EBI-19137100">
        <id>Q86TJ5</id>
        <label>ZNF554</label>
    </interactant>
    <organismsDiffer>false</organismsDiffer>
    <experiments>3</experiments>
</comment>
<comment type="interaction">
    <interactant intactId="EBI-372432">
        <id>Q8WW01</id>
    </interactant>
    <interactant intactId="EBI-4395669">
        <id>Q6ZNG0</id>
        <label>ZNF620</label>
    </interactant>
    <organismsDiffer>false</organismsDiffer>
    <experiments>3</experiments>
</comment>
<comment type="subcellular location">
    <subcellularLocation>
        <location evidence="8">Nucleus</location>
    </subcellularLocation>
    <subcellularLocation>
        <location evidence="8">Nucleus</location>
        <location evidence="8">Nucleolus</location>
    </subcellularLocation>
    <text evidence="8">May be transiently localized in the nucleolus.</text>
</comment>
<comment type="alternative products">
    <event type="alternative splicing"/>
    <isoform>
        <id>Q8WW01-1</id>
        <name>1</name>
        <sequence type="displayed"/>
    </isoform>
    <isoform>
        <id>Q8WW01-2</id>
        <name>2</name>
        <sequence type="described" ref="VSP_042723"/>
    </isoform>
</comment>
<comment type="tissue specificity">
    <text evidence="2">Widely expressed. Highly expressed in testis and uterus.</text>
</comment>
<comment type="disease" evidence="5 6">
    <disease id="DI-04758">
        <name>Pontocerebellar hypoplasia 2F</name>
        <acronym>PCH2F</acronym>
        <description>A neurodevelopmental disorder characterized by progressive microcephaly, cognitive and motor delay, poor or absent speech, seizures, and spasticity. PCH2F inheritance is autosomal recessive.</description>
        <dbReference type="MIM" id="617026"/>
    </disease>
    <text>The disease is caused by variants affecting the gene represented in this entry.</text>
</comment>
<comment type="similarity">
    <text evidence="8">Belongs to the SEN15 family.</text>
</comment>
<comment type="caution">
    <text evidence="8">Although only weakly related to the S.cerevisiae SEN15 protein, it probably displays the same function within the tRNA splicing endonuclease complex.</text>
</comment>
<comment type="sequence caution" evidence="8">
    <conflict type="erroneous initiation">
        <sequence resource="EMBL-CDS" id="AAG60614"/>
    </conflict>
</comment>